<feature type="chain" id="PRO_0000109040" description="UDP-N-acetylmuramoylalanine--D-glutamate ligase">
    <location>
        <begin position="1"/>
        <end position="455"/>
    </location>
</feature>
<feature type="binding site" evidence="1">
    <location>
        <begin position="119"/>
        <end position="125"/>
    </location>
    <ligand>
        <name>ATP</name>
        <dbReference type="ChEBI" id="CHEBI:30616"/>
    </ligand>
</feature>
<comment type="function">
    <text evidence="1">Cell wall formation. Catalyzes the addition of glutamate to the nucleotide precursor UDP-N-acetylmuramoyl-L-alanine (UMA).</text>
</comment>
<comment type="catalytic activity">
    <reaction evidence="1">
        <text>UDP-N-acetyl-alpha-D-muramoyl-L-alanine + D-glutamate + ATP = UDP-N-acetyl-alpha-D-muramoyl-L-alanyl-D-glutamate + ADP + phosphate + H(+)</text>
        <dbReference type="Rhea" id="RHEA:16429"/>
        <dbReference type="ChEBI" id="CHEBI:15378"/>
        <dbReference type="ChEBI" id="CHEBI:29986"/>
        <dbReference type="ChEBI" id="CHEBI:30616"/>
        <dbReference type="ChEBI" id="CHEBI:43474"/>
        <dbReference type="ChEBI" id="CHEBI:83898"/>
        <dbReference type="ChEBI" id="CHEBI:83900"/>
        <dbReference type="ChEBI" id="CHEBI:456216"/>
        <dbReference type="EC" id="6.3.2.9"/>
    </reaction>
</comment>
<comment type="pathway">
    <text evidence="1">Cell wall biogenesis; peptidoglycan biosynthesis.</text>
</comment>
<comment type="subcellular location">
    <subcellularLocation>
        <location evidence="1">Cytoplasm</location>
    </subcellularLocation>
</comment>
<comment type="similarity">
    <text evidence="1">Belongs to the MurCDEF family.</text>
</comment>
<reference key="1">
    <citation type="journal article" date="2004" name="Nucleic Acids Res.">
        <title>Whole genome comparisons of serotype 4b and 1/2a strains of the food-borne pathogen Listeria monocytogenes reveal new insights into the core genome components of this species.</title>
        <authorList>
            <person name="Nelson K.E."/>
            <person name="Fouts D.E."/>
            <person name="Mongodin E.F."/>
            <person name="Ravel J."/>
            <person name="DeBoy R.T."/>
            <person name="Kolonay J.F."/>
            <person name="Rasko D.A."/>
            <person name="Angiuoli S.V."/>
            <person name="Gill S.R."/>
            <person name="Paulsen I.T."/>
            <person name="Peterson J.D."/>
            <person name="White O."/>
            <person name="Nelson W.C."/>
            <person name="Nierman W.C."/>
            <person name="Beanan M.J."/>
            <person name="Brinkac L.M."/>
            <person name="Daugherty S.C."/>
            <person name="Dodson R.J."/>
            <person name="Durkin A.S."/>
            <person name="Madupu R."/>
            <person name="Haft D.H."/>
            <person name="Selengut J."/>
            <person name="Van Aken S.E."/>
            <person name="Khouri H.M."/>
            <person name="Fedorova N."/>
            <person name="Forberger H.A."/>
            <person name="Tran B."/>
            <person name="Kathariou S."/>
            <person name="Wonderling L.D."/>
            <person name="Uhlich G.A."/>
            <person name="Bayles D.O."/>
            <person name="Luchansky J.B."/>
            <person name="Fraser C.M."/>
        </authorList>
    </citation>
    <scope>NUCLEOTIDE SEQUENCE [LARGE SCALE GENOMIC DNA]</scope>
    <source>
        <strain>F2365</strain>
    </source>
</reference>
<gene>
    <name evidence="1" type="primary">murD</name>
    <name type="ordered locus">LMOf2365_2068</name>
</gene>
<accession>Q71XX7</accession>
<sequence>MKKIEMYHHKKVLVLGLARSGVSAATIMHKLGAFVTVNDQKPFSENPEAQGLLEQGIKVICGSHPIELLDEGFELVIKNPGIPYNNPMIEKALKLKIPVITEVELAYQISEAPIVGITGTNGKTTTTTIIHHMLNAHKENSSLLAGNIGFPASAVAENATSDQYISMELSSFQLMGVETFKPHISVITNIYEAHLDYHTDRSEYVQAKWHIQKNQTADDFLVINWDQEELKNLTKQTKAQVIPFSTTQRLGQGSYVQNGNIMFNDEVIGARDNILLPGEHNLENVLASVAVAKTLGVTNEEIMHVLETFKGVEHRTQFVVEWQGRKFYNDSKATNILATQSALKGFKNPVVLLAGGLDRGNSFDELLPFFKNVKALIVFGETADKIGRVGKIAGIDVHYVDNVEAAVPVAYRESAPGDIILLSPACASWDQYRTFEVRGNAYMDAIGELIEEVEK</sequence>
<evidence type="ECO:0000255" key="1">
    <source>
        <dbReference type="HAMAP-Rule" id="MF_00639"/>
    </source>
</evidence>
<proteinExistence type="inferred from homology"/>
<organism>
    <name type="scientific">Listeria monocytogenes serotype 4b (strain F2365)</name>
    <dbReference type="NCBI Taxonomy" id="265669"/>
    <lineage>
        <taxon>Bacteria</taxon>
        <taxon>Bacillati</taxon>
        <taxon>Bacillota</taxon>
        <taxon>Bacilli</taxon>
        <taxon>Bacillales</taxon>
        <taxon>Listeriaceae</taxon>
        <taxon>Listeria</taxon>
    </lineage>
</organism>
<name>MURD_LISMF</name>
<keyword id="KW-0067">ATP-binding</keyword>
<keyword id="KW-0131">Cell cycle</keyword>
<keyword id="KW-0132">Cell division</keyword>
<keyword id="KW-0133">Cell shape</keyword>
<keyword id="KW-0961">Cell wall biogenesis/degradation</keyword>
<keyword id="KW-0963">Cytoplasm</keyword>
<keyword id="KW-0436">Ligase</keyword>
<keyword id="KW-0547">Nucleotide-binding</keyword>
<keyword id="KW-0573">Peptidoglycan synthesis</keyword>
<dbReference type="EC" id="6.3.2.9" evidence="1"/>
<dbReference type="EMBL" id="AE017262">
    <property type="protein sequence ID" value="AAT04838.1"/>
    <property type="molecule type" value="Genomic_DNA"/>
</dbReference>
<dbReference type="RefSeq" id="WP_003726818.1">
    <property type="nucleotide sequence ID" value="NC_002973.6"/>
</dbReference>
<dbReference type="SMR" id="Q71XX7"/>
<dbReference type="DNASU" id="2798221"/>
<dbReference type="KEGG" id="lmf:LMOf2365_2068"/>
<dbReference type="HOGENOM" id="CLU_032540_0_1_9"/>
<dbReference type="UniPathway" id="UPA00219"/>
<dbReference type="GO" id="GO:0005737">
    <property type="term" value="C:cytoplasm"/>
    <property type="evidence" value="ECO:0007669"/>
    <property type="project" value="UniProtKB-SubCell"/>
</dbReference>
<dbReference type="GO" id="GO:0005524">
    <property type="term" value="F:ATP binding"/>
    <property type="evidence" value="ECO:0007669"/>
    <property type="project" value="UniProtKB-UniRule"/>
</dbReference>
<dbReference type="GO" id="GO:0004326">
    <property type="term" value="F:tetrahydrofolylpolyglutamate synthase activity"/>
    <property type="evidence" value="ECO:0007669"/>
    <property type="project" value="InterPro"/>
</dbReference>
<dbReference type="GO" id="GO:0008764">
    <property type="term" value="F:UDP-N-acetylmuramoylalanine-D-glutamate ligase activity"/>
    <property type="evidence" value="ECO:0007669"/>
    <property type="project" value="UniProtKB-UniRule"/>
</dbReference>
<dbReference type="GO" id="GO:0051301">
    <property type="term" value="P:cell division"/>
    <property type="evidence" value="ECO:0007669"/>
    <property type="project" value="UniProtKB-KW"/>
</dbReference>
<dbReference type="GO" id="GO:0071555">
    <property type="term" value="P:cell wall organization"/>
    <property type="evidence" value="ECO:0007669"/>
    <property type="project" value="UniProtKB-KW"/>
</dbReference>
<dbReference type="GO" id="GO:0009252">
    <property type="term" value="P:peptidoglycan biosynthetic process"/>
    <property type="evidence" value="ECO:0007669"/>
    <property type="project" value="UniProtKB-UniRule"/>
</dbReference>
<dbReference type="GO" id="GO:0008360">
    <property type="term" value="P:regulation of cell shape"/>
    <property type="evidence" value="ECO:0007669"/>
    <property type="project" value="UniProtKB-KW"/>
</dbReference>
<dbReference type="Gene3D" id="3.90.190.20">
    <property type="entry name" value="Mur ligase, C-terminal domain"/>
    <property type="match status" value="1"/>
</dbReference>
<dbReference type="Gene3D" id="3.40.1190.10">
    <property type="entry name" value="Mur-like, catalytic domain"/>
    <property type="match status" value="1"/>
</dbReference>
<dbReference type="Gene3D" id="3.40.50.720">
    <property type="entry name" value="NAD(P)-binding Rossmann-like Domain"/>
    <property type="match status" value="1"/>
</dbReference>
<dbReference type="HAMAP" id="MF_00639">
    <property type="entry name" value="MurD"/>
    <property type="match status" value="1"/>
</dbReference>
<dbReference type="InterPro" id="IPR018109">
    <property type="entry name" value="Folylpolyglutamate_synth_CS"/>
</dbReference>
<dbReference type="InterPro" id="IPR036565">
    <property type="entry name" value="Mur-like_cat_sf"/>
</dbReference>
<dbReference type="InterPro" id="IPR004101">
    <property type="entry name" value="Mur_ligase_C"/>
</dbReference>
<dbReference type="InterPro" id="IPR036615">
    <property type="entry name" value="Mur_ligase_C_dom_sf"/>
</dbReference>
<dbReference type="InterPro" id="IPR013221">
    <property type="entry name" value="Mur_ligase_cen"/>
</dbReference>
<dbReference type="InterPro" id="IPR005762">
    <property type="entry name" value="MurD"/>
</dbReference>
<dbReference type="NCBIfam" id="TIGR01087">
    <property type="entry name" value="murD"/>
    <property type="match status" value="1"/>
</dbReference>
<dbReference type="PANTHER" id="PTHR43692">
    <property type="entry name" value="UDP-N-ACETYLMURAMOYLALANINE--D-GLUTAMATE LIGASE"/>
    <property type="match status" value="1"/>
</dbReference>
<dbReference type="PANTHER" id="PTHR43692:SF1">
    <property type="entry name" value="UDP-N-ACETYLMURAMOYLALANINE--D-GLUTAMATE LIGASE"/>
    <property type="match status" value="1"/>
</dbReference>
<dbReference type="Pfam" id="PF02875">
    <property type="entry name" value="Mur_ligase_C"/>
    <property type="match status" value="1"/>
</dbReference>
<dbReference type="Pfam" id="PF08245">
    <property type="entry name" value="Mur_ligase_M"/>
    <property type="match status" value="1"/>
</dbReference>
<dbReference type="Pfam" id="PF21799">
    <property type="entry name" value="MurD-like_N"/>
    <property type="match status" value="1"/>
</dbReference>
<dbReference type="SUPFAM" id="SSF51984">
    <property type="entry name" value="MurCD N-terminal domain"/>
    <property type="match status" value="1"/>
</dbReference>
<dbReference type="SUPFAM" id="SSF53623">
    <property type="entry name" value="MurD-like peptide ligases, catalytic domain"/>
    <property type="match status" value="1"/>
</dbReference>
<dbReference type="SUPFAM" id="SSF53244">
    <property type="entry name" value="MurD-like peptide ligases, peptide-binding domain"/>
    <property type="match status" value="1"/>
</dbReference>
<protein>
    <recommendedName>
        <fullName evidence="1">UDP-N-acetylmuramoylalanine--D-glutamate ligase</fullName>
        <ecNumber evidence="1">6.3.2.9</ecNumber>
    </recommendedName>
    <alternativeName>
        <fullName evidence="1">D-glutamic acid-adding enzyme</fullName>
    </alternativeName>
    <alternativeName>
        <fullName evidence="1">UDP-N-acetylmuramoyl-L-alanyl-D-glutamate synthetase</fullName>
    </alternativeName>
</protein>